<feature type="chain" id="PRO_1000094422" description="Shikimate kinase">
    <location>
        <begin position="1"/>
        <end position="163"/>
    </location>
</feature>
<feature type="binding site" evidence="1">
    <location>
        <begin position="10"/>
        <end position="15"/>
    </location>
    <ligand>
        <name>ATP</name>
        <dbReference type="ChEBI" id="CHEBI:30616"/>
    </ligand>
</feature>
<feature type="binding site" evidence="1">
    <location>
        <position position="14"/>
    </location>
    <ligand>
        <name>Mg(2+)</name>
        <dbReference type="ChEBI" id="CHEBI:18420"/>
    </ligand>
</feature>
<feature type="binding site" evidence="1">
    <location>
        <position position="28"/>
    </location>
    <ligand>
        <name>substrate</name>
    </ligand>
</feature>
<feature type="binding site" evidence="1">
    <location>
        <position position="52"/>
    </location>
    <ligand>
        <name>substrate</name>
    </ligand>
</feature>
<feature type="binding site" evidence="1">
    <location>
        <position position="75"/>
    </location>
    <ligand>
        <name>substrate</name>
    </ligand>
</feature>
<feature type="binding site" evidence="1">
    <location>
        <position position="116"/>
    </location>
    <ligand>
        <name>ATP</name>
        <dbReference type="ChEBI" id="CHEBI:30616"/>
    </ligand>
</feature>
<feature type="binding site" evidence="1">
    <location>
        <position position="134"/>
    </location>
    <ligand>
        <name>substrate</name>
    </ligand>
</feature>
<feature type="binding site" evidence="1">
    <location>
        <position position="151"/>
    </location>
    <ligand>
        <name>ATP</name>
        <dbReference type="ChEBI" id="CHEBI:30616"/>
    </ligand>
</feature>
<dbReference type="EC" id="2.7.1.71" evidence="1"/>
<dbReference type="EMBL" id="CP000262">
    <property type="protein sequence ID" value="ABF38149.1"/>
    <property type="molecule type" value="Genomic_DNA"/>
</dbReference>
<dbReference type="SMR" id="Q1J634"/>
<dbReference type="KEGG" id="spi:MGAS10750_Spy1199"/>
<dbReference type="HOGENOM" id="CLU_057607_4_3_9"/>
<dbReference type="UniPathway" id="UPA00053">
    <property type="reaction ID" value="UER00088"/>
</dbReference>
<dbReference type="Proteomes" id="UP000002434">
    <property type="component" value="Chromosome"/>
</dbReference>
<dbReference type="GO" id="GO:0005829">
    <property type="term" value="C:cytosol"/>
    <property type="evidence" value="ECO:0007669"/>
    <property type="project" value="TreeGrafter"/>
</dbReference>
<dbReference type="GO" id="GO:0005524">
    <property type="term" value="F:ATP binding"/>
    <property type="evidence" value="ECO:0007669"/>
    <property type="project" value="UniProtKB-UniRule"/>
</dbReference>
<dbReference type="GO" id="GO:0000287">
    <property type="term" value="F:magnesium ion binding"/>
    <property type="evidence" value="ECO:0007669"/>
    <property type="project" value="UniProtKB-UniRule"/>
</dbReference>
<dbReference type="GO" id="GO:0004765">
    <property type="term" value="F:shikimate kinase activity"/>
    <property type="evidence" value="ECO:0007669"/>
    <property type="project" value="UniProtKB-UniRule"/>
</dbReference>
<dbReference type="GO" id="GO:0008652">
    <property type="term" value="P:amino acid biosynthetic process"/>
    <property type="evidence" value="ECO:0007669"/>
    <property type="project" value="UniProtKB-KW"/>
</dbReference>
<dbReference type="GO" id="GO:0009073">
    <property type="term" value="P:aromatic amino acid family biosynthetic process"/>
    <property type="evidence" value="ECO:0007669"/>
    <property type="project" value="UniProtKB-KW"/>
</dbReference>
<dbReference type="GO" id="GO:0009423">
    <property type="term" value="P:chorismate biosynthetic process"/>
    <property type="evidence" value="ECO:0007669"/>
    <property type="project" value="UniProtKB-UniRule"/>
</dbReference>
<dbReference type="CDD" id="cd00464">
    <property type="entry name" value="SK"/>
    <property type="match status" value="1"/>
</dbReference>
<dbReference type="Gene3D" id="3.40.50.300">
    <property type="entry name" value="P-loop containing nucleotide triphosphate hydrolases"/>
    <property type="match status" value="1"/>
</dbReference>
<dbReference type="HAMAP" id="MF_00109">
    <property type="entry name" value="Shikimate_kinase"/>
    <property type="match status" value="1"/>
</dbReference>
<dbReference type="InterPro" id="IPR027417">
    <property type="entry name" value="P-loop_NTPase"/>
</dbReference>
<dbReference type="InterPro" id="IPR031322">
    <property type="entry name" value="Shikimate/glucono_kinase"/>
</dbReference>
<dbReference type="InterPro" id="IPR000623">
    <property type="entry name" value="Shikimate_kinase/TSH1"/>
</dbReference>
<dbReference type="PANTHER" id="PTHR21087">
    <property type="entry name" value="SHIKIMATE KINASE"/>
    <property type="match status" value="1"/>
</dbReference>
<dbReference type="PANTHER" id="PTHR21087:SF16">
    <property type="entry name" value="SHIKIMATE KINASE 1, CHLOROPLASTIC"/>
    <property type="match status" value="1"/>
</dbReference>
<dbReference type="Pfam" id="PF01202">
    <property type="entry name" value="SKI"/>
    <property type="match status" value="1"/>
</dbReference>
<dbReference type="PRINTS" id="PR01100">
    <property type="entry name" value="SHIKIMTKNASE"/>
</dbReference>
<dbReference type="SUPFAM" id="SSF52540">
    <property type="entry name" value="P-loop containing nucleoside triphosphate hydrolases"/>
    <property type="match status" value="1"/>
</dbReference>
<organism>
    <name type="scientific">Streptococcus pyogenes serotype M4 (strain MGAS10750)</name>
    <dbReference type="NCBI Taxonomy" id="370554"/>
    <lineage>
        <taxon>Bacteria</taxon>
        <taxon>Bacillati</taxon>
        <taxon>Bacillota</taxon>
        <taxon>Bacilli</taxon>
        <taxon>Lactobacillales</taxon>
        <taxon>Streptococcaceae</taxon>
        <taxon>Streptococcus</taxon>
    </lineage>
</organism>
<evidence type="ECO:0000255" key="1">
    <source>
        <dbReference type="HAMAP-Rule" id="MF_00109"/>
    </source>
</evidence>
<accession>Q1J634</accession>
<proteinExistence type="inferred from homology"/>
<reference key="1">
    <citation type="journal article" date="2006" name="Proc. Natl. Acad. Sci. U.S.A.">
        <title>Molecular genetic anatomy of inter- and intraserotype variation in the human bacterial pathogen group A Streptococcus.</title>
        <authorList>
            <person name="Beres S.B."/>
            <person name="Richter E.W."/>
            <person name="Nagiec M.J."/>
            <person name="Sumby P."/>
            <person name="Porcella S.F."/>
            <person name="DeLeo F.R."/>
            <person name="Musser J.M."/>
        </authorList>
    </citation>
    <scope>NUCLEOTIDE SEQUENCE [LARGE SCALE GENOMIC DNA]</scope>
    <source>
        <strain>MGAS10750</strain>
    </source>
</reference>
<sequence length="163" mass="18782">MTKVLLGFMGVGKTTVSKHLSMHCKDMDAIIEAKIGMSIAAFFEQHGEIAFRTIESQVLKDLLFTNDNSVIVTGGGVVVLQENRQLLRKNHQHNILLVASFETLYQRLKHDKKSQRPLFLKYSKEAFYEFYQQRMVFYEGLSDLVIRVDHRTPEEVANIIEGY</sequence>
<protein>
    <recommendedName>
        <fullName evidence="1">Shikimate kinase</fullName>
        <shortName evidence="1">SK</shortName>
        <ecNumber evidence="1">2.7.1.71</ecNumber>
    </recommendedName>
</protein>
<comment type="function">
    <text evidence="1">Catalyzes the specific phosphorylation of the 3-hydroxyl group of shikimic acid using ATP as a cosubstrate.</text>
</comment>
<comment type="catalytic activity">
    <reaction evidence="1">
        <text>shikimate + ATP = 3-phosphoshikimate + ADP + H(+)</text>
        <dbReference type="Rhea" id="RHEA:13121"/>
        <dbReference type="ChEBI" id="CHEBI:15378"/>
        <dbReference type="ChEBI" id="CHEBI:30616"/>
        <dbReference type="ChEBI" id="CHEBI:36208"/>
        <dbReference type="ChEBI" id="CHEBI:145989"/>
        <dbReference type="ChEBI" id="CHEBI:456216"/>
        <dbReference type="EC" id="2.7.1.71"/>
    </reaction>
</comment>
<comment type="cofactor">
    <cofactor evidence="1">
        <name>Mg(2+)</name>
        <dbReference type="ChEBI" id="CHEBI:18420"/>
    </cofactor>
    <text evidence="1">Binds 1 Mg(2+) ion per subunit.</text>
</comment>
<comment type="pathway">
    <text evidence="1">Metabolic intermediate biosynthesis; chorismate biosynthesis; chorismate from D-erythrose 4-phosphate and phosphoenolpyruvate: step 5/7.</text>
</comment>
<comment type="subunit">
    <text evidence="1">Monomer.</text>
</comment>
<comment type="subcellular location">
    <subcellularLocation>
        <location evidence="1">Cytoplasm</location>
    </subcellularLocation>
</comment>
<comment type="similarity">
    <text evidence="1">Belongs to the shikimate kinase family.</text>
</comment>
<gene>
    <name evidence="1" type="primary">aroK</name>
    <name type="ordered locus">MGAS10750_Spy1199</name>
</gene>
<keyword id="KW-0028">Amino-acid biosynthesis</keyword>
<keyword id="KW-0057">Aromatic amino acid biosynthesis</keyword>
<keyword id="KW-0067">ATP-binding</keyword>
<keyword id="KW-0963">Cytoplasm</keyword>
<keyword id="KW-0418">Kinase</keyword>
<keyword id="KW-0460">Magnesium</keyword>
<keyword id="KW-0479">Metal-binding</keyword>
<keyword id="KW-0547">Nucleotide-binding</keyword>
<keyword id="KW-0808">Transferase</keyword>
<name>AROK_STRPF</name>